<gene>
    <name evidence="1" type="primary">speE</name>
    <name type="ordered locus">Csac_1879</name>
</gene>
<reference key="1">
    <citation type="submission" date="2007-04" db="EMBL/GenBank/DDBJ databases">
        <title>Genome sequence of the thermophilic hydrogen-producing bacterium Caldicellulosiruptor saccharolyticus DSM 8903.</title>
        <authorList>
            <person name="Copeland A."/>
            <person name="Lucas S."/>
            <person name="Lapidus A."/>
            <person name="Barry K."/>
            <person name="Detter J.C."/>
            <person name="Glavina del Rio T."/>
            <person name="Hammon N."/>
            <person name="Israni S."/>
            <person name="Dalin E."/>
            <person name="Tice H."/>
            <person name="Pitluck S."/>
            <person name="Kiss H."/>
            <person name="Brettin T."/>
            <person name="Bruce D."/>
            <person name="Han C."/>
            <person name="Schmutz J."/>
            <person name="Larimer F."/>
            <person name="Land M."/>
            <person name="Hauser L."/>
            <person name="Kyrpides N."/>
            <person name="Lykidis A."/>
            <person name="van de Werken H.J.G."/>
            <person name="Verhaart M.R.A."/>
            <person name="VanFossen A.L."/>
            <person name="Lewis D.L."/>
            <person name="Nichols J.D."/>
            <person name="Goorissen H.P."/>
            <person name="van Niel E.W.J."/>
            <person name="Stams F.J.M."/>
            <person name="Willquist K.U."/>
            <person name="Ward D.E."/>
            <person name="van der Oost J."/>
            <person name="Kelly R.M."/>
            <person name="Kengen S.M.W."/>
            <person name="Richardson P."/>
        </authorList>
    </citation>
    <scope>NUCLEOTIDE SEQUENCE [LARGE SCALE GENOMIC DNA]</scope>
    <source>
        <strain>ATCC 43494 / DSM 8903 / Tp8T 6331</strain>
    </source>
</reference>
<proteinExistence type="inferred from homology"/>
<organism>
    <name type="scientific">Caldicellulosiruptor saccharolyticus (strain ATCC 43494 / DSM 8903 / Tp8T 6331)</name>
    <dbReference type="NCBI Taxonomy" id="351627"/>
    <lineage>
        <taxon>Bacteria</taxon>
        <taxon>Bacillati</taxon>
        <taxon>Bacillota</taxon>
        <taxon>Bacillota incertae sedis</taxon>
        <taxon>Caldicellulosiruptorales</taxon>
        <taxon>Caldicellulosiruptoraceae</taxon>
        <taxon>Caldicellulosiruptor</taxon>
    </lineage>
</organism>
<accession>A4XKM9</accession>
<name>SPEE_CALS8</name>
<dbReference type="EC" id="2.5.1.16" evidence="1"/>
<dbReference type="EMBL" id="CP000679">
    <property type="protein sequence ID" value="ABP67464.1"/>
    <property type="molecule type" value="Genomic_DNA"/>
</dbReference>
<dbReference type="SMR" id="A4XKM9"/>
<dbReference type="STRING" id="351627.Csac_1879"/>
<dbReference type="KEGG" id="csc:Csac_1879"/>
<dbReference type="eggNOG" id="COG0421">
    <property type="taxonomic scope" value="Bacteria"/>
</dbReference>
<dbReference type="HOGENOM" id="CLU_048199_0_0_9"/>
<dbReference type="OrthoDB" id="9793120at2"/>
<dbReference type="UniPathway" id="UPA00248">
    <property type="reaction ID" value="UER00314"/>
</dbReference>
<dbReference type="Proteomes" id="UP000000256">
    <property type="component" value="Chromosome"/>
</dbReference>
<dbReference type="GO" id="GO:0005829">
    <property type="term" value="C:cytosol"/>
    <property type="evidence" value="ECO:0007669"/>
    <property type="project" value="TreeGrafter"/>
</dbReference>
<dbReference type="GO" id="GO:0004766">
    <property type="term" value="F:spermidine synthase activity"/>
    <property type="evidence" value="ECO:0007669"/>
    <property type="project" value="UniProtKB-UniRule"/>
</dbReference>
<dbReference type="GO" id="GO:0008295">
    <property type="term" value="P:spermidine biosynthetic process"/>
    <property type="evidence" value="ECO:0007669"/>
    <property type="project" value="UniProtKB-UniRule"/>
</dbReference>
<dbReference type="CDD" id="cd02440">
    <property type="entry name" value="AdoMet_MTases"/>
    <property type="match status" value="1"/>
</dbReference>
<dbReference type="FunFam" id="3.40.50.150:FF:000056">
    <property type="entry name" value="Polyamine aminopropyltransferase"/>
    <property type="match status" value="1"/>
</dbReference>
<dbReference type="Gene3D" id="2.30.140.10">
    <property type="entry name" value="Spermidine synthase, tetramerisation domain"/>
    <property type="match status" value="1"/>
</dbReference>
<dbReference type="Gene3D" id="3.40.50.150">
    <property type="entry name" value="Vaccinia Virus protein VP39"/>
    <property type="match status" value="1"/>
</dbReference>
<dbReference type="HAMAP" id="MF_00198">
    <property type="entry name" value="Spermidine_synth"/>
    <property type="match status" value="1"/>
</dbReference>
<dbReference type="InterPro" id="IPR030374">
    <property type="entry name" value="PABS"/>
</dbReference>
<dbReference type="InterPro" id="IPR030373">
    <property type="entry name" value="PABS_CS"/>
</dbReference>
<dbReference type="InterPro" id="IPR029063">
    <property type="entry name" value="SAM-dependent_MTases_sf"/>
</dbReference>
<dbReference type="InterPro" id="IPR001045">
    <property type="entry name" value="Spermi_synthase"/>
</dbReference>
<dbReference type="InterPro" id="IPR035246">
    <property type="entry name" value="Spermidine_synt_N"/>
</dbReference>
<dbReference type="InterPro" id="IPR037163">
    <property type="entry name" value="Spermidine_synt_N_sf"/>
</dbReference>
<dbReference type="NCBIfam" id="NF002010">
    <property type="entry name" value="PRK00811.1"/>
    <property type="match status" value="1"/>
</dbReference>
<dbReference type="NCBIfam" id="TIGR00417">
    <property type="entry name" value="speE"/>
    <property type="match status" value="1"/>
</dbReference>
<dbReference type="PANTHER" id="PTHR11558:SF11">
    <property type="entry name" value="SPERMIDINE SYNTHASE"/>
    <property type="match status" value="1"/>
</dbReference>
<dbReference type="PANTHER" id="PTHR11558">
    <property type="entry name" value="SPERMIDINE/SPERMINE SYNTHASE"/>
    <property type="match status" value="1"/>
</dbReference>
<dbReference type="Pfam" id="PF17284">
    <property type="entry name" value="Spermine_synt_N"/>
    <property type="match status" value="1"/>
</dbReference>
<dbReference type="Pfam" id="PF01564">
    <property type="entry name" value="Spermine_synth"/>
    <property type="match status" value="1"/>
</dbReference>
<dbReference type="SUPFAM" id="SSF53335">
    <property type="entry name" value="S-adenosyl-L-methionine-dependent methyltransferases"/>
    <property type="match status" value="1"/>
</dbReference>
<dbReference type="PROSITE" id="PS01330">
    <property type="entry name" value="PABS_1"/>
    <property type="match status" value="1"/>
</dbReference>
<dbReference type="PROSITE" id="PS51006">
    <property type="entry name" value="PABS_2"/>
    <property type="match status" value="1"/>
</dbReference>
<protein>
    <recommendedName>
        <fullName evidence="1">Polyamine aminopropyltransferase</fullName>
    </recommendedName>
    <alternativeName>
        <fullName evidence="1">Putrescine aminopropyltransferase</fullName>
        <shortName evidence="1">PAPT</shortName>
    </alternativeName>
    <alternativeName>
        <fullName evidence="1">Spermidine synthase</fullName>
        <shortName evidence="1">SPDS</shortName>
        <shortName evidence="1">SPDSY</shortName>
        <ecNumber evidence="1">2.5.1.16</ecNumber>
    </alternativeName>
</protein>
<keyword id="KW-0963">Cytoplasm</keyword>
<keyword id="KW-0620">Polyamine biosynthesis</keyword>
<keyword id="KW-0745">Spermidine biosynthesis</keyword>
<keyword id="KW-0808">Transferase</keyword>
<sequence>MAEMELWFTEQQTPDLGFTCKITKTIYTAKTKYQDLAILETKQFGKMLVLDGAVQTTIVDEFCYHELIAHVPLFTHPNPKKVAVIGGGDGGVIREILKHEEVEKAYLIEIDQEVIEASKKYLPEISCALDDKRAEVIITDGIKFVSENKNMFDVIIVDSTDPVGPAVGLFESNFYQAVYECLKEDGLFVAQTESPFYDQDLIRNVFHSIKSIFPITRLYLGFIPTYPSGLWSFTMGSKKYDPLEIDTSKIKRIDTRYYNPELHKALFALPTFVQKIIE</sequence>
<evidence type="ECO:0000255" key="1">
    <source>
        <dbReference type="HAMAP-Rule" id="MF_00198"/>
    </source>
</evidence>
<comment type="function">
    <text evidence="1">Catalyzes the irreversible transfer of a propylamine group from the amino donor S-adenosylmethioninamine (decarboxy-AdoMet) to putrescine (1,4-diaminobutane) to yield spermidine.</text>
</comment>
<comment type="catalytic activity">
    <reaction evidence="1">
        <text>S-adenosyl 3-(methylsulfanyl)propylamine + putrescine = S-methyl-5'-thioadenosine + spermidine + H(+)</text>
        <dbReference type="Rhea" id="RHEA:12721"/>
        <dbReference type="ChEBI" id="CHEBI:15378"/>
        <dbReference type="ChEBI" id="CHEBI:17509"/>
        <dbReference type="ChEBI" id="CHEBI:57443"/>
        <dbReference type="ChEBI" id="CHEBI:57834"/>
        <dbReference type="ChEBI" id="CHEBI:326268"/>
        <dbReference type="EC" id="2.5.1.16"/>
    </reaction>
</comment>
<comment type="pathway">
    <text evidence="1">Amine and polyamine biosynthesis; spermidine biosynthesis; spermidine from putrescine: step 1/1.</text>
</comment>
<comment type="subunit">
    <text evidence="1">Homodimer or homotetramer.</text>
</comment>
<comment type="subcellular location">
    <subcellularLocation>
        <location evidence="1">Cytoplasm</location>
    </subcellularLocation>
</comment>
<comment type="similarity">
    <text evidence="1">Belongs to the spermidine/spermine synthase family.</text>
</comment>
<feature type="chain" id="PRO_1000011992" description="Polyamine aminopropyltransferase">
    <location>
        <begin position="1"/>
        <end position="278"/>
    </location>
</feature>
<feature type="domain" description="PABS" evidence="1">
    <location>
        <begin position="5"/>
        <end position="238"/>
    </location>
</feature>
<feature type="active site" description="Proton acceptor" evidence="1">
    <location>
        <position position="158"/>
    </location>
</feature>
<feature type="binding site" evidence="1">
    <location>
        <position position="34"/>
    </location>
    <ligand>
        <name>S-methyl-5'-thioadenosine</name>
        <dbReference type="ChEBI" id="CHEBI:17509"/>
    </ligand>
</feature>
<feature type="binding site" evidence="1">
    <location>
        <position position="65"/>
    </location>
    <ligand>
        <name>spermidine</name>
        <dbReference type="ChEBI" id="CHEBI:57834"/>
    </ligand>
</feature>
<feature type="binding site" evidence="1">
    <location>
        <position position="89"/>
    </location>
    <ligand>
        <name>spermidine</name>
        <dbReference type="ChEBI" id="CHEBI:57834"/>
    </ligand>
</feature>
<feature type="binding site" evidence="1">
    <location>
        <position position="109"/>
    </location>
    <ligand>
        <name>S-methyl-5'-thioadenosine</name>
        <dbReference type="ChEBI" id="CHEBI:17509"/>
    </ligand>
</feature>
<feature type="binding site" evidence="1">
    <location>
        <begin position="140"/>
        <end position="141"/>
    </location>
    <ligand>
        <name>S-methyl-5'-thioadenosine</name>
        <dbReference type="ChEBI" id="CHEBI:17509"/>
    </ligand>
</feature>
<feature type="binding site" evidence="1">
    <location>
        <begin position="158"/>
        <end position="161"/>
    </location>
    <ligand>
        <name>spermidine</name>
        <dbReference type="ChEBI" id="CHEBI:57834"/>
    </ligand>
</feature>
<feature type="binding site" evidence="1">
    <location>
        <position position="165"/>
    </location>
    <ligand>
        <name>S-methyl-5'-thioadenosine</name>
        <dbReference type="ChEBI" id="CHEBI:17509"/>
    </ligand>
</feature>